<reference key="1">
    <citation type="journal article" date="2001" name="Biochem. Biophys. Res. Commun.">
        <title>Activin A induces expression of rat Sel-1l mRNA, a negative regulator of notch signaling, in rat salivary gland-derived epithelial cells.</title>
        <authorList>
            <person name="Furue M."/>
            <person name="Zhang Y."/>
            <person name="Okamoto T."/>
            <person name="Hata R."/>
            <person name="Asashima M."/>
        </authorList>
    </citation>
    <scope>NUCLEOTIDE SEQUENCE [MRNA]</scope>
    <scope>FUNCTION</scope>
    <source>
        <tissue>Salivary gland</tissue>
    </source>
</reference>
<reference key="2">
    <citation type="journal article" date="2013" name="J. Proteome Res.">
        <title>Site-specific glycan-peptide analysis for determination of N-glycoproteome heterogeneity.</title>
        <authorList>
            <person name="Parker B.L."/>
            <person name="Thaysen-Andersen M."/>
            <person name="Solis N."/>
            <person name="Scott N.E."/>
            <person name="Larsen M.R."/>
            <person name="Graham M.E."/>
            <person name="Packer N.H."/>
            <person name="Cordwell S.J."/>
        </authorList>
    </citation>
    <scope>GLYCOSYLATION [LARGE SCALE ANALYSIS] AT ASN-608</scope>
    <scope>IDENTIFICATION BY MASS SPECTROMETRY [LARGE SCALE ANALYSIS]</scope>
    <source>
        <tissue>Brain</tissue>
    </source>
</reference>
<comment type="function">
    <text evidence="3 8">Plays a role in the endoplasmic reticulum quality control (ERQC) system also called ER-associated degradation (ERAD) involved in ubiquitin-dependent degradation of misfolded endoplasmic reticulum proteins. Enhances SYVN1 stability. Plays a role in LPL maturation and secretion. Required for normal differentiation of the pancreas epithelium, and for normal exocrine function and survival of pancreatic cells (By similarity). May play a role in Notch signaling (PubMed:11401526).</text>
</comment>
<comment type="subunit">
    <text evidence="2 3">Homodimer and homooligomer (By similarity). May form a complex with ERLEC1, HSPA5, OS9, and SYVN1 (By similarity). Interacts with FOXRED2 and EDEM1 (By similarity). Interacts with LPL and LMF1; may stabilize the complex formed by LPL and LMF1 and thereby promote the export of LPL dimers (By similarity). Component of the HRD1 complex, which comprises at least SYNV1/HRD1, DERL1/2, FAM8A1, HERPUD1/HERP, OS9, SEL1L and UBE2J1 (By similarity). SYNV1 assembles with SEL1L and FAM8A1 through its transmembrane domains, but interaction with its cytoplasmic domain is required to confer stability to FAM8A1 and enhance recruitment of HERPUD1 (By similarity). The interaction with SYNV1/HRD1 is direct (By similarity).</text>
</comment>
<comment type="subcellular location">
    <subcellularLocation>
        <location evidence="2">Endoplasmic reticulum membrane</location>
        <topology evidence="2">Single-pass type I membrane protein</topology>
    </subcellularLocation>
</comment>
<comment type="PTM">
    <text evidence="2">N-glycosylated.</text>
</comment>
<comment type="similarity">
    <text evidence="7">Belongs to the sel-1 family.</text>
</comment>
<comment type="sequence caution" evidence="7">
    <conflict type="frameshift">
        <sequence resource="EMBL-CDS" id="AAO65770"/>
    </conflict>
</comment>
<name>SE1L1_RAT</name>
<organism>
    <name type="scientific">Rattus norvegicus</name>
    <name type="common">Rat</name>
    <dbReference type="NCBI Taxonomy" id="10116"/>
    <lineage>
        <taxon>Eukaryota</taxon>
        <taxon>Metazoa</taxon>
        <taxon>Chordata</taxon>
        <taxon>Craniata</taxon>
        <taxon>Vertebrata</taxon>
        <taxon>Euteleostomi</taxon>
        <taxon>Mammalia</taxon>
        <taxon>Eutheria</taxon>
        <taxon>Euarchontoglires</taxon>
        <taxon>Glires</taxon>
        <taxon>Rodentia</taxon>
        <taxon>Myomorpha</taxon>
        <taxon>Muroidea</taxon>
        <taxon>Muridae</taxon>
        <taxon>Murinae</taxon>
        <taxon>Rattus</taxon>
    </lineage>
</organism>
<feature type="signal peptide" evidence="4">
    <location>
        <begin position="1"/>
        <end position="21"/>
    </location>
</feature>
<feature type="chain" id="PRO_0000022297" description="Protein sel-1 homolog 1">
    <location>
        <begin position="22"/>
        <end position="794"/>
    </location>
</feature>
<feature type="topological domain" description="Lumenal" evidence="4">
    <location>
        <begin position="22"/>
        <end position="738"/>
    </location>
</feature>
<feature type="transmembrane region" description="Helical" evidence="4">
    <location>
        <begin position="739"/>
        <end position="759"/>
    </location>
</feature>
<feature type="topological domain" description="Cytoplasmic" evidence="4">
    <location>
        <begin position="760"/>
        <end position="794"/>
    </location>
</feature>
<feature type="domain" description="Fibronectin type-II" evidence="5">
    <location>
        <begin position="122"/>
        <end position="170"/>
    </location>
</feature>
<feature type="repeat" description="Sel1-like 1">
    <location>
        <begin position="183"/>
        <end position="218"/>
    </location>
</feature>
<feature type="repeat" description="Sel1-like 2">
    <location>
        <begin position="219"/>
        <end position="254"/>
    </location>
</feature>
<feature type="repeat" description="Sel1-like 3">
    <location>
        <begin position="255"/>
        <end position="290"/>
    </location>
</feature>
<feature type="repeat" description="Sel1-like 4">
    <location>
        <begin position="291"/>
        <end position="326"/>
    </location>
</feature>
<feature type="repeat" description="Sel1-like 5">
    <location>
        <begin position="373"/>
        <end position="409"/>
    </location>
</feature>
<feature type="repeat" description="Sel1-like 6">
    <location>
        <begin position="410"/>
        <end position="446"/>
    </location>
</feature>
<feature type="repeat" description="Sel1-like 7">
    <location>
        <begin position="447"/>
        <end position="482"/>
    </location>
</feature>
<feature type="repeat" description="Sel1-like 8">
    <location>
        <begin position="483"/>
        <end position="518"/>
    </location>
</feature>
<feature type="repeat" description="Sel1-like 9">
    <location>
        <begin position="519"/>
        <end position="554"/>
    </location>
</feature>
<feature type="repeat" description="Sel1-like 10">
    <location>
        <begin position="627"/>
        <end position="662"/>
    </location>
</feature>
<feature type="repeat" description="Sel1-like 11">
    <location>
        <begin position="664"/>
        <end position="699"/>
    </location>
</feature>
<feature type="region of interest" description="Interaction with ERLEC1, OS9 and SYVN1" evidence="1">
    <location>
        <begin position="22"/>
        <end position="737"/>
    </location>
</feature>
<feature type="region of interest" description="Disordered" evidence="6">
    <location>
        <begin position="23"/>
        <end position="46"/>
    </location>
</feature>
<feature type="region of interest" description="Disordered" evidence="6">
    <location>
        <begin position="73"/>
        <end position="105"/>
    </location>
</feature>
<feature type="region of interest" description="Important for homodimerization and oligomerization" evidence="3">
    <location>
        <begin position="352"/>
        <end position="537"/>
    </location>
</feature>
<feature type="region of interest" description="Interaction with SYVN1" evidence="3">
    <location>
        <begin position="643"/>
        <end position="723"/>
    </location>
</feature>
<feature type="region of interest" description="Mediates retention in the endoplasmic reticulum" evidence="1">
    <location>
        <begin position="738"/>
        <end position="794"/>
    </location>
</feature>
<feature type="region of interest" description="Disordered" evidence="6">
    <location>
        <begin position="767"/>
        <end position="794"/>
    </location>
</feature>
<feature type="compositionally biased region" description="Acidic residues" evidence="6">
    <location>
        <begin position="23"/>
        <end position="32"/>
    </location>
</feature>
<feature type="compositionally biased region" description="Pro residues" evidence="6">
    <location>
        <begin position="771"/>
        <end position="794"/>
    </location>
</feature>
<feature type="glycosylation site" description="N-linked (GlcNAc...) asparagine" evidence="4">
    <location>
        <position position="195"/>
    </location>
</feature>
<feature type="glycosylation site" description="N-linked (GlcNAc...) asparagine" evidence="4">
    <location>
        <position position="217"/>
    </location>
</feature>
<feature type="glycosylation site" description="N-linked (GlcNAc...) asparagine" evidence="4">
    <location>
        <position position="272"/>
    </location>
</feature>
<feature type="glycosylation site" description="N-linked (GlcNAc...) asparagine" evidence="4">
    <location>
        <position position="431"/>
    </location>
</feature>
<feature type="glycosylation site" description="N-linked (GlcNAc...) asparagine" evidence="9">
    <location>
        <position position="608"/>
    </location>
</feature>
<feature type="disulfide bond" evidence="5">
    <location>
        <begin position="127"/>
        <end position="153"/>
    </location>
</feature>
<feature type="disulfide bond" evidence="5">
    <location>
        <begin position="141"/>
        <end position="168"/>
    </location>
</feature>
<accession>Q80Z70</accession>
<proteinExistence type="evidence at protein level"/>
<dbReference type="EMBL" id="AF304853">
    <property type="protein sequence ID" value="AAO65770.1"/>
    <property type="status" value="ALT_FRAME"/>
    <property type="molecule type" value="mRNA"/>
</dbReference>
<dbReference type="SMR" id="Q80Z70"/>
<dbReference type="BioGRID" id="260692">
    <property type="interactions" value="1"/>
</dbReference>
<dbReference type="FunCoup" id="Q80Z70">
    <property type="interactions" value="2548"/>
</dbReference>
<dbReference type="STRING" id="10116.ENSRNOP00000043232"/>
<dbReference type="GlyCosmos" id="Q80Z70">
    <property type="glycosylation" value="5 sites, 4 glycans"/>
</dbReference>
<dbReference type="GlyGen" id="Q80Z70">
    <property type="glycosylation" value="5 sites, 4 N-linked glycans (2 sites)"/>
</dbReference>
<dbReference type="iPTMnet" id="Q80Z70"/>
<dbReference type="PhosphoSitePlus" id="Q80Z70"/>
<dbReference type="SwissPalm" id="Q80Z70"/>
<dbReference type="jPOST" id="Q80Z70"/>
<dbReference type="PaxDb" id="10116-ENSRNOP00000043232"/>
<dbReference type="UCSC" id="RGD:620147">
    <property type="organism name" value="rat"/>
</dbReference>
<dbReference type="AGR" id="RGD:620147"/>
<dbReference type="RGD" id="620147">
    <property type="gene designation" value="Sel1l"/>
</dbReference>
<dbReference type="eggNOG" id="KOG1550">
    <property type="taxonomic scope" value="Eukaryota"/>
</dbReference>
<dbReference type="InParanoid" id="Q80Z70"/>
<dbReference type="PhylomeDB" id="Q80Z70"/>
<dbReference type="Reactome" id="R-RNO-382556">
    <property type="pathway name" value="ABC-family proteins mediated transport"/>
</dbReference>
<dbReference type="Reactome" id="R-RNO-5358346">
    <property type="pathway name" value="Hedgehog ligand biogenesis"/>
</dbReference>
<dbReference type="PRO" id="PR:Q80Z70"/>
<dbReference type="Proteomes" id="UP000002494">
    <property type="component" value="Unplaced"/>
</dbReference>
<dbReference type="GO" id="GO:0036513">
    <property type="term" value="C:Derlin-1 retrotranslocation complex"/>
    <property type="evidence" value="ECO:0000266"/>
    <property type="project" value="RGD"/>
</dbReference>
<dbReference type="GO" id="GO:0005783">
    <property type="term" value="C:endoplasmic reticulum"/>
    <property type="evidence" value="ECO:0000250"/>
    <property type="project" value="UniProtKB"/>
</dbReference>
<dbReference type="GO" id="GO:0005789">
    <property type="term" value="C:endoplasmic reticulum membrane"/>
    <property type="evidence" value="ECO:0000318"/>
    <property type="project" value="GO_Central"/>
</dbReference>
<dbReference type="GO" id="GO:0000836">
    <property type="term" value="C:Hrd1p ubiquitin ligase complex"/>
    <property type="evidence" value="ECO:0000266"/>
    <property type="project" value="RGD"/>
</dbReference>
<dbReference type="GO" id="GO:0000839">
    <property type="term" value="C:Hrd1p ubiquitin ligase ERAD-L complex"/>
    <property type="evidence" value="ECO:0000250"/>
    <property type="project" value="UniProtKB"/>
</dbReference>
<dbReference type="GO" id="GO:0036503">
    <property type="term" value="P:ERAD pathway"/>
    <property type="evidence" value="ECO:0000250"/>
    <property type="project" value="UniProtKB"/>
</dbReference>
<dbReference type="GO" id="GO:0007219">
    <property type="term" value="P:Notch signaling pathway"/>
    <property type="evidence" value="ECO:0007669"/>
    <property type="project" value="UniProtKB-KW"/>
</dbReference>
<dbReference type="GO" id="GO:0009306">
    <property type="term" value="P:protein secretion"/>
    <property type="evidence" value="ECO:0000250"/>
    <property type="project" value="UniProtKB"/>
</dbReference>
<dbReference type="GO" id="GO:0034976">
    <property type="term" value="P:response to endoplasmic reticulum stress"/>
    <property type="evidence" value="ECO:0000266"/>
    <property type="project" value="RGD"/>
</dbReference>
<dbReference type="GO" id="GO:0030970">
    <property type="term" value="P:retrograde protein transport, ER to cytosol"/>
    <property type="evidence" value="ECO:0000266"/>
    <property type="project" value="RGD"/>
</dbReference>
<dbReference type="GO" id="GO:0006641">
    <property type="term" value="P:triglyceride metabolic process"/>
    <property type="evidence" value="ECO:0000250"/>
    <property type="project" value="UniProtKB"/>
</dbReference>
<dbReference type="CDD" id="cd00062">
    <property type="entry name" value="FN2"/>
    <property type="match status" value="1"/>
</dbReference>
<dbReference type="FunFam" id="2.10.10.10:FF:000001">
    <property type="entry name" value="Fibronectin 1a isoform 1"/>
    <property type="match status" value="1"/>
</dbReference>
<dbReference type="FunFam" id="1.25.40.10:FF:000208">
    <property type="entry name" value="Protein sel-1 homolog 1"/>
    <property type="match status" value="1"/>
</dbReference>
<dbReference type="FunFam" id="1.25.40.10:FF:000193">
    <property type="entry name" value="protein sel-1 homolog 1 isoform X1"/>
    <property type="match status" value="1"/>
</dbReference>
<dbReference type="FunFam" id="1.25.40.10:FF:000200">
    <property type="entry name" value="protein sel-1 homolog 1 precursor"/>
    <property type="match status" value="1"/>
</dbReference>
<dbReference type="Gene3D" id="2.10.10.10">
    <property type="entry name" value="Fibronectin, type II, collagen-binding"/>
    <property type="match status" value="1"/>
</dbReference>
<dbReference type="Gene3D" id="1.25.40.10">
    <property type="entry name" value="Tetratricopeptide repeat domain"/>
    <property type="match status" value="3"/>
</dbReference>
<dbReference type="InterPro" id="IPR000562">
    <property type="entry name" value="FN_type2_dom"/>
</dbReference>
<dbReference type="InterPro" id="IPR036943">
    <property type="entry name" value="FN_type2_sf"/>
</dbReference>
<dbReference type="InterPro" id="IPR013806">
    <property type="entry name" value="Kringle-like"/>
</dbReference>
<dbReference type="InterPro" id="IPR006597">
    <property type="entry name" value="Sel1-like"/>
</dbReference>
<dbReference type="InterPro" id="IPR050767">
    <property type="entry name" value="Sel1_AlgK"/>
</dbReference>
<dbReference type="InterPro" id="IPR011990">
    <property type="entry name" value="TPR-like_helical_dom_sf"/>
</dbReference>
<dbReference type="PANTHER" id="PTHR11102:SF70">
    <property type="entry name" value="PROTEIN SEL-1 HOMOLOG 1"/>
    <property type="match status" value="1"/>
</dbReference>
<dbReference type="PANTHER" id="PTHR11102">
    <property type="entry name" value="SEL-1-LIKE PROTEIN"/>
    <property type="match status" value="1"/>
</dbReference>
<dbReference type="Pfam" id="PF00040">
    <property type="entry name" value="fn2"/>
    <property type="match status" value="1"/>
</dbReference>
<dbReference type="Pfam" id="PF08238">
    <property type="entry name" value="Sel1"/>
    <property type="match status" value="11"/>
</dbReference>
<dbReference type="PRINTS" id="PR00013">
    <property type="entry name" value="FNTYPEII"/>
</dbReference>
<dbReference type="SMART" id="SM00059">
    <property type="entry name" value="FN2"/>
    <property type="match status" value="1"/>
</dbReference>
<dbReference type="SMART" id="SM00671">
    <property type="entry name" value="SEL1"/>
    <property type="match status" value="11"/>
</dbReference>
<dbReference type="SUPFAM" id="SSF81901">
    <property type="entry name" value="HCP-like"/>
    <property type="match status" value="3"/>
</dbReference>
<dbReference type="SUPFAM" id="SSF57440">
    <property type="entry name" value="Kringle-like"/>
    <property type="match status" value="1"/>
</dbReference>
<dbReference type="PROSITE" id="PS00023">
    <property type="entry name" value="FN2_1"/>
    <property type="match status" value="1"/>
</dbReference>
<dbReference type="PROSITE" id="PS51092">
    <property type="entry name" value="FN2_2"/>
    <property type="match status" value="1"/>
</dbReference>
<sequence>MQVRVRLLLLLCAVLLGSAAASSDEETNQDESLDSKGALPTDGSVKDHTTGKVVLLARDLLILKDSEVESLLQDEEESSKSQEEVSVTEDISFLDSPNPSSKTYEELKRVRKPVLTAIEGTAHGEPCHFPFLFLDKEYDECTSDGREDGRLWCATTYDYKTDEKWGFCETEEDAAKRRQMQEAEAIYQSGMKILNGSTRKNQKREAYRYLQKAAGMNHTKALERVSYALLFGDYLTQNIQAAKEMFEKLTEEGSPKGQTGLGFLYASGLGVNSSQAKALVYYTFGALGGNLIAHMVLGYRYWAGIGVLQSCESALTHYRLVANHVASDISLTGGSVVQRIRLPDEVENPGMNSGMLEEDLIQYYQFLAEKGDVQAQVGLGQLHLHGGRGVEQNHQRAFDYFNLAANAGNSHAMAFLGKMYSEGSDIVPQSNETALHYFKKAADMGNPVGQSGLGMAYLYGRGVQVNYDLALKYFQKAAEQGWVDGQLQLGSMYYNGIGVKRDYKQALKYFNLASQGGHILAFYNLAQMHASGTGVMRSCHTAVELFKNVCERGRWSERLMTAYNSYKDDDYNAAVVQYLLLAEQGYEVAQSNAAFILDQREATIVGENETYPRALLHWNRAASQGYTVARIKLGDYHFYGFGTDVDYETAFIHYRLASEQQHSAQAMFNLGYMHEKGLGIKQDIHLAKRFYDMAAEASPDAQVPVFLALCKLGVVYFLQYIREANIRDLFTQLDMDQLLGPEWDLYLMTIIALLLGTVIAYRQRQHQDIPVPRPPGPRPAPPQQEGPPEQQPPQ</sequence>
<gene>
    <name type="primary">Sel1l</name>
    <name type="synonym">Sel1h</name>
</gene>
<evidence type="ECO:0000250" key="1"/>
<evidence type="ECO:0000250" key="2">
    <source>
        <dbReference type="UniProtKB" id="Q9UBV2"/>
    </source>
</evidence>
<evidence type="ECO:0000250" key="3">
    <source>
        <dbReference type="UniProtKB" id="Q9Z2G6"/>
    </source>
</evidence>
<evidence type="ECO:0000255" key="4"/>
<evidence type="ECO:0000255" key="5">
    <source>
        <dbReference type="PROSITE-ProRule" id="PRU00479"/>
    </source>
</evidence>
<evidence type="ECO:0000256" key="6">
    <source>
        <dbReference type="SAM" id="MobiDB-lite"/>
    </source>
</evidence>
<evidence type="ECO:0000305" key="7"/>
<evidence type="ECO:0000305" key="8">
    <source>
    </source>
</evidence>
<evidence type="ECO:0007744" key="9">
    <source>
    </source>
</evidence>
<protein>
    <recommendedName>
        <fullName>Protein sel-1 homolog 1</fullName>
    </recommendedName>
    <alternativeName>
        <fullName>Suppressor of lin-12-like protein 1</fullName>
        <shortName>Sel-1L</shortName>
    </alternativeName>
</protein>
<keyword id="KW-1015">Disulfide bond</keyword>
<keyword id="KW-0256">Endoplasmic reticulum</keyword>
<keyword id="KW-0325">Glycoprotein</keyword>
<keyword id="KW-0472">Membrane</keyword>
<keyword id="KW-0914">Notch signaling pathway</keyword>
<keyword id="KW-1185">Reference proteome</keyword>
<keyword id="KW-0677">Repeat</keyword>
<keyword id="KW-0732">Signal</keyword>
<keyword id="KW-0812">Transmembrane</keyword>
<keyword id="KW-1133">Transmembrane helix</keyword>